<accession>C4KZ55</accession>
<comment type="function">
    <text evidence="1">Converts GTP to 7,8-dihydroneopterin triphosphate.</text>
</comment>
<comment type="catalytic activity">
    <reaction evidence="1">
        <text>GTP + H2O = 7,8-dihydroneopterin 3'-triphosphate + formate + H(+)</text>
        <dbReference type="Rhea" id="RHEA:17473"/>
        <dbReference type="ChEBI" id="CHEBI:15377"/>
        <dbReference type="ChEBI" id="CHEBI:15378"/>
        <dbReference type="ChEBI" id="CHEBI:15740"/>
        <dbReference type="ChEBI" id="CHEBI:37565"/>
        <dbReference type="ChEBI" id="CHEBI:58462"/>
        <dbReference type="EC" id="3.5.4.16"/>
    </reaction>
</comment>
<comment type="pathway">
    <text evidence="1">Cofactor biosynthesis; 7,8-dihydroneopterin triphosphate biosynthesis; 7,8-dihydroneopterin triphosphate from GTP: step 1/1.</text>
</comment>
<comment type="similarity">
    <text evidence="1">Belongs to the GTP cyclohydrolase IV family.</text>
</comment>
<keyword id="KW-0378">Hydrolase</keyword>
<dbReference type="EC" id="3.5.4.16" evidence="1"/>
<dbReference type="EMBL" id="CP001615">
    <property type="protein sequence ID" value="ACQ70368.1"/>
    <property type="molecule type" value="Genomic_DNA"/>
</dbReference>
<dbReference type="RefSeq" id="WP_012727487.1">
    <property type="nucleotide sequence ID" value="NC_012673.1"/>
</dbReference>
<dbReference type="SMR" id="C4KZ55"/>
<dbReference type="STRING" id="360911.EAT1b_1441"/>
<dbReference type="KEGG" id="eat:EAT1b_1441"/>
<dbReference type="eggNOG" id="COG1469">
    <property type="taxonomic scope" value="Bacteria"/>
</dbReference>
<dbReference type="HOGENOM" id="CLU_062816_1_1_9"/>
<dbReference type="OrthoDB" id="9774824at2"/>
<dbReference type="UniPathway" id="UPA00848">
    <property type="reaction ID" value="UER00151"/>
</dbReference>
<dbReference type="Proteomes" id="UP000000716">
    <property type="component" value="Chromosome"/>
</dbReference>
<dbReference type="GO" id="GO:0003934">
    <property type="term" value="F:GTP cyclohydrolase I activity"/>
    <property type="evidence" value="ECO:0007669"/>
    <property type="project" value="UniProtKB-UniRule"/>
</dbReference>
<dbReference type="GO" id="GO:0046654">
    <property type="term" value="P:tetrahydrofolate biosynthetic process"/>
    <property type="evidence" value="ECO:0007669"/>
    <property type="project" value="UniProtKB-UniRule"/>
</dbReference>
<dbReference type="Gene3D" id="3.10.270.10">
    <property type="entry name" value="Urate Oxidase"/>
    <property type="match status" value="1"/>
</dbReference>
<dbReference type="HAMAP" id="MF_01527_B">
    <property type="entry name" value="GTP_cyclohydrol_B"/>
    <property type="match status" value="1"/>
</dbReference>
<dbReference type="InterPro" id="IPR022838">
    <property type="entry name" value="GTP_cyclohydrolase_FolE2"/>
</dbReference>
<dbReference type="InterPro" id="IPR003801">
    <property type="entry name" value="GTP_cyclohydrolase_FolE2/MptA"/>
</dbReference>
<dbReference type="NCBIfam" id="NF010200">
    <property type="entry name" value="PRK13674.1-1"/>
    <property type="match status" value="1"/>
</dbReference>
<dbReference type="PANTHER" id="PTHR36445">
    <property type="entry name" value="GTP CYCLOHYDROLASE MPTA"/>
    <property type="match status" value="1"/>
</dbReference>
<dbReference type="PANTHER" id="PTHR36445:SF1">
    <property type="entry name" value="GTP CYCLOHYDROLASE MPTA"/>
    <property type="match status" value="1"/>
</dbReference>
<dbReference type="Pfam" id="PF02649">
    <property type="entry name" value="GCHY-1"/>
    <property type="match status" value="1"/>
</dbReference>
<gene>
    <name evidence="1" type="primary">folE2</name>
    <name type="ordered locus">EAT1b_1441</name>
</gene>
<sequence>MSTSHVALPTKAERHKLFGSVPPIKGTKPTEKEQMVDLQNTPKNFLFALDSVGISNVKHPVNVETPEGVQSTVATFELTTSLVQDRKGINMSRLTEQLDAYHQQGWTVSNRSLIEFAQELAERMEQTEGQLTIRYPWFFTRKAPATGLSGLMNADVMHRVTYNLETGVANVTVGLVINVTTLCPCSKEISEYSAHNQRGYITIEAGLDETSMDGFDWRAALLDAAESNASAPLHPVLKRPDEKRATEIAYENPRFVEDMVRLIAADLYEMKQVVNFFVECRNEESIHQHDAIASITFDKRQDA</sequence>
<evidence type="ECO:0000255" key="1">
    <source>
        <dbReference type="HAMAP-Rule" id="MF_01527"/>
    </source>
</evidence>
<reference key="1">
    <citation type="journal article" date="2011" name="J. Bacteriol.">
        <title>Complete genome sequence of the Thermophilic Bacterium Exiguobacterium sp. AT1b.</title>
        <authorList>
            <person name="Vishnivetskaya T.A."/>
            <person name="Lucas S."/>
            <person name="Copeland A."/>
            <person name="Lapidus A."/>
            <person name="Glavina del Rio T."/>
            <person name="Dalin E."/>
            <person name="Tice H."/>
            <person name="Bruce D.C."/>
            <person name="Goodwin L.A."/>
            <person name="Pitluck S."/>
            <person name="Saunders E."/>
            <person name="Brettin T."/>
            <person name="Detter C."/>
            <person name="Han C."/>
            <person name="Larimer F."/>
            <person name="Land M.L."/>
            <person name="Hauser L.J."/>
            <person name="Kyrpides N.C."/>
            <person name="Ovchinnikova G."/>
            <person name="Kathariou S."/>
            <person name="Ramaley R.F."/>
            <person name="Rodrigues D.F."/>
            <person name="Hendrix C."/>
            <person name="Richardson P."/>
            <person name="Tiedje J.M."/>
        </authorList>
    </citation>
    <scope>NUCLEOTIDE SEQUENCE [LARGE SCALE GENOMIC DNA]</scope>
    <source>
        <strain>ATCC BAA-1283 / AT1b</strain>
    </source>
</reference>
<organism>
    <name type="scientific">Exiguobacterium sp. (strain ATCC BAA-1283 / AT1b)</name>
    <dbReference type="NCBI Taxonomy" id="360911"/>
    <lineage>
        <taxon>Bacteria</taxon>
        <taxon>Bacillati</taxon>
        <taxon>Bacillota</taxon>
        <taxon>Bacilli</taxon>
        <taxon>Bacillales</taxon>
        <taxon>Bacillales Family XII. Incertae Sedis</taxon>
        <taxon>Exiguobacterium</taxon>
    </lineage>
</organism>
<name>GCH4_EXISA</name>
<proteinExistence type="inferred from homology"/>
<protein>
    <recommendedName>
        <fullName evidence="1">GTP cyclohydrolase FolE2</fullName>
        <ecNumber evidence="1">3.5.4.16</ecNumber>
    </recommendedName>
</protein>
<feature type="chain" id="PRO_1000215390" description="GTP cyclohydrolase FolE2">
    <location>
        <begin position="1"/>
        <end position="303"/>
    </location>
</feature>
<feature type="site" description="May be catalytically important" evidence="1">
    <location>
        <position position="183"/>
    </location>
</feature>